<comment type="function">
    <text evidence="1">Involved in the maturation of [NiFe] hydrogenases. Required for nickel insertion into the metal center of the hydrogenase.</text>
</comment>
<comment type="similarity">
    <text evidence="1">Belongs to the HypA/HybF family.</text>
</comment>
<feature type="chain" id="PRO_1000204207" description="Hydrogenase maturation factor HypA">
    <location>
        <begin position="1"/>
        <end position="110"/>
    </location>
</feature>
<feature type="binding site" evidence="1">
    <location>
        <position position="2"/>
    </location>
    <ligand>
        <name>Ni(2+)</name>
        <dbReference type="ChEBI" id="CHEBI:49786"/>
    </ligand>
</feature>
<feature type="binding site" evidence="1">
    <location>
        <position position="70"/>
    </location>
    <ligand>
        <name>Zn(2+)</name>
        <dbReference type="ChEBI" id="CHEBI:29105"/>
    </ligand>
</feature>
<feature type="binding site" evidence="1">
    <location>
        <position position="73"/>
    </location>
    <ligand>
        <name>Zn(2+)</name>
        <dbReference type="ChEBI" id="CHEBI:29105"/>
    </ligand>
</feature>
<feature type="binding site" evidence="1">
    <location>
        <position position="86"/>
    </location>
    <ligand>
        <name>Zn(2+)</name>
        <dbReference type="ChEBI" id="CHEBI:29105"/>
    </ligand>
</feature>
<feature type="binding site" evidence="1">
    <location>
        <position position="89"/>
    </location>
    <ligand>
        <name>Zn(2+)</name>
        <dbReference type="ChEBI" id="CHEBI:29105"/>
    </ligand>
</feature>
<sequence>MHEMSITQSVVEICEVHAAGRKVTEVVLLIGELSGVVPESVEFCFEACSKGTLLEGARLQLELVLGVGSCPACHGEFPISTLFEPCPGCGAFGLSVVAGEELRVKELELE</sequence>
<proteinExistence type="inferred from homology"/>
<reference key="1">
    <citation type="submission" date="2009-07" db="EMBL/GenBank/DDBJ databases">
        <title>Complete sequence of Geobacter sp. M21.</title>
        <authorList>
            <consortium name="US DOE Joint Genome Institute"/>
            <person name="Lucas S."/>
            <person name="Copeland A."/>
            <person name="Lapidus A."/>
            <person name="Glavina del Rio T."/>
            <person name="Dalin E."/>
            <person name="Tice H."/>
            <person name="Bruce D."/>
            <person name="Goodwin L."/>
            <person name="Pitluck S."/>
            <person name="Saunders E."/>
            <person name="Brettin T."/>
            <person name="Detter J.C."/>
            <person name="Han C."/>
            <person name="Larimer F."/>
            <person name="Land M."/>
            <person name="Hauser L."/>
            <person name="Kyrpides N."/>
            <person name="Ovchinnikova G."/>
            <person name="Lovley D."/>
        </authorList>
    </citation>
    <scope>NUCLEOTIDE SEQUENCE [LARGE SCALE GENOMIC DNA]</scope>
    <source>
        <strain>M21</strain>
    </source>
</reference>
<keyword id="KW-0479">Metal-binding</keyword>
<keyword id="KW-0533">Nickel</keyword>
<keyword id="KW-0862">Zinc</keyword>
<accession>C6E310</accession>
<evidence type="ECO:0000255" key="1">
    <source>
        <dbReference type="HAMAP-Rule" id="MF_00213"/>
    </source>
</evidence>
<gene>
    <name evidence="1" type="primary">hypA</name>
    <name type="ordered locus">GM21_1122</name>
</gene>
<protein>
    <recommendedName>
        <fullName evidence="1">Hydrogenase maturation factor HypA</fullName>
    </recommendedName>
</protein>
<name>HYPA_GEOSM</name>
<organism>
    <name type="scientific">Geobacter sp. (strain M21)</name>
    <dbReference type="NCBI Taxonomy" id="443144"/>
    <lineage>
        <taxon>Bacteria</taxon>
        <taxon>Pseudomonadati</taxon>
        <taxon>Thermodesulfobacteriota</taxon>
        <taxon>Desulfuromonadia</taxon>
        <taxon>Geobacterales</taxon>
        <taxon>Geobacteraceae</taxon>
        <taxon>Geobacter</taxon>
    </lineage>
</organism>
<dbReference type="EMBL" id="CP001661">
    <property type="protein sequence ID" value="ACT17183.1"/>
    <property type="molecule type" value="Genomic_DNA"/>
</dbReference>
<dbReference type="SMR" id="C6E310"/>
<dbReference type="STRING" id="443144.GM21_1122"/>
<dbReference type="KEGG" id="gem:GM21_1122"/>
<dbReference type="eggNOG" id="COG0375">
    <property type="taxonomic scope" value="Bacteria"/>
</dbReference>
<dbReference type="HOGENOM" id="CLU_126929_3_0_7"/>
<dbReference type="OrthoDB" id="9800361at2"/>
<dbReference type="GO" id="GO:0016151">
    <property type="term" value="F:nickel cation binding"/>
    <property type="evidence" value="ECO:0007669"/>
    <property type="project" value="UniProtKB-UniRule"/>
</dbReference>
<dbReference type="GO" id="GO:0008270">
    <property type="term" value="F:zinc ion binding"/>
    <property type="evidence" value="ECO:0007669"/>
    <property type="project" value="UniProtKB-UniRule"/>
</dbReference>
<dbReference type="GO" id="GO:0051604">
    <property type="term" value="P:protein maturation"/>
    <property type="evidence" value="ECO:0007669"/>
    <property type="project" value="InterPro"/>
</dbReference>
<dbReference type="GO" id="GO:0036211">
    <property type="term" value="P:protein modification process"/>
    <property type="evidence" value="ECO:0007669"/>
    <property type="project" value="UniProtKB-UniRule"/>
</dbReference>
<dbReference type="Gene3D" id="3.30.2320.80">
    <property type="match status" value="1"/>
</dbReference>
<dbReference type="HAMAP" id="MF_00213">
    <property type="entry name" value="HypA_HybF"/>
    <property type="match status" value="1"/>
</dbReference>
<dbReference type="InterPro" id="IPR020538">
    <property type="entry name" value="Hydgase_Ni_incorp_HypA/HybF_CS"/>
</dbReference>
<dbReference type="InterPro" id="IPR000688">
    <property type="entry name" value="HypA/HybF"/>
</dbReference>
<dbReference type="NCBIfam" id="TIGR00100">
    <property type="entry name" value="hypA"/>
    <property type="match status" value="1"/>
</dbReference>
<dbReference type="PANTHER" id="PTHR34535">
    <property type="entry name" value="HYDROGENASE MATURATION FACTOR HYPA"/>
    <property type="match status" value="1"/>
</dbReference>
<dbReference type="PANTHER" id="PTHR34535:SF3">
    <property type="entry name" value="HYDROGENASE MATURATION FACTOR HYPA"/>
    <property type="match status" value="1"/>
</dbReference>
<dbReference type="Pfam" id="PF01155">
    <property type="entry name" value="HypA"/>
    <property type="match status" value="1"/>
</dbReference>
<dbReference type="PIRSF" id="PIRSF004761">
    <property type="entry name" value="Hydrgn_mat_HypA"/>
    <property type="match status" value="1"/>
</dbReference>
<dbReference type="PROSITE" id="PS01249">
    <property type="entry name" value="HYPA"/>
    <property type="match status" value="1"/>
</dbReference>